<name>ORYZ_ASPFL</name>
<protein>
    <recommendedName>
        <fullName>Alkaline protease 1</fullName>
        <shortName>ALP</shortName>
        <ecNumber>3.4.21.63</ecNumber>
    </recommendedName>
    <alternativeName>
        <fullName>Aspergillopeptidase B</fullName>
    </alternativeName>
    <alternativeName>
        <fullName>Aspergillus proteinase B</fullName>
    </alternativeName>
    <alternativeName>
        <fullName>Elastase</fullName>
    </alternativeName>
    <alternativeName>
        <fullName>Elastinolytic serine proteinase</fullName>
    </alternativeName>
    <alternativeName>
        <fullName>Oryzin</fullName>
    </alternativeName>
</protein>
<comment type="function">
    <text evidence="1">Secreted alkaline protease that allows assimilation of proteinaceous substrates.</text>
</comment>
<comment type="catalytic activity">
    <reaction>
        <text>Hydrolysis of proteins with broad specificity, and of Bz-Arg-OEt &gt; Ac-Tyr-OEt. Does not hydrolyze peptide amides.</text>
        <dbReference type="EC" id="3.4.21.63"/>
    </reaction>
</comment>
<comment type="subcellular location">
    <subcellularLocation>
        <location evidence="1">Secreted</location>
    </subcellularLocation>
</comment>
<comment type="similarity">
    <text evidence="4">Belongs to the peptidase S8 family.</text>
</comment>
<sequence>MQSIKRTLLLLGAVLPAVLAGPIFPHRRAPTTIPGKYIVTFKSDVDQAAIDKHTAWATDIHKRNLQRRDSSEEDLPIGIERNFKINKFAAYSGSFDEDTIAQIRQSDEVAAVEEDQVWHLFDLTTQSDAPWGLGSISHKGQPSTDYIYDTNGGEGTYAYVVDIGINVDHEEFEGRASLAYHAAGGQHVDGVGHGTHVSGTIGGKTYGVAKKANLLSVKVFVGESSSTSIILDGFNWAANDIVSKKRTGKAAINMSLGGGYSKAFNDAVENAFNEGVLSIVAAGNENTDASRTSPASAPDAFTVAAINVNNTRAYFSNYGSVVDIFAPGQNILSAWIGSNTATNTISGTSMATPHIVGLSIYLMSLEVLSSPKAVSDRIKELATRGVVSNVAGSPNLLAYNGNA</sequence>
<reference key="1">
    <citation type="journal article" date="1994" name="Infect. Immun.">
        <title>Isolation, characterization, and cloning of cDNA and the gene for an elastinolytic serine proteinase from Aspergillus flavus.</title>
        <authorList>
            <person name="Ramesh M.V."/>
            <person name="Sirakova T."/>
            <person name="Kolattukudy P.E."/>
        </authorList>
    </citation>
    <scope>NUCLEOTIDE SEQUENCE [GENOMIC DNA]</scope>
    <scope>PARTIAL PROTEIN SEQUENCE</scope>
</reference>
<keyword id="KW-0903">Direct protein sequencing</keyword>
<keyword id="KW-0325">Glycoprotein</keyword>
<keyword id="KW-0378">Hydrolase</keyword>
<keyword id="KW-0645">Protease</keyword>
<keyword id="KW-0964">Secreted</keyword>
<keyword id="KW-0720">Serine protease</keyword>
<keyword id="KW-0732">Signal</keyword>
<keyword id="KW-0865">Zymogen</keyword>
<gene>
    <name type="primary">alp1</name>
    <name type="synonym">alk1</name>
    <name type="synonym">alp</name>
</gene>
<dbReference type="EC" id="3.4.21.63"/>
<dbReference type="EMBL" id="L08473">
    <property type="protein sequence ID" value="AAA32691.1"/>
    <property type="molecule type" value="Genomic_DNA"/>
</dbReference>
<dbReference type="EMBL" id="S67840">
    <property type="protein sequence ID" value="AAB29384.1"/>
    <property type="molecule type" value="Genomic_DNA"/>
</dbReference>
<dbReference type="SMR" id="P35211"/>
<dbReference type="MEROPS" id="S08.053"/>
<dbReference type="GlyCosmos" id="P35211">
    <property type="glycosylation" value="2 sites, No reported glycans"/>
</dbReference>
<dbReference type="VEuPathDB" id="FungiDB:AFLA_000633"/>
<dbReference type="VEuPathDB" id="FungiDB:F9C07_2278087"/>
<dbReference type="BRENDA" id="3.4.21.63">
    <property type="organism ID" value="506"/>
</dbReference>
<dbReference type="GO" id="GO:0005576">
    <property type="term" value="C:extracellular region"/>
    <property type="evidence" value="ECO:0007669"/>
    <property type="project" value="UniProtKB-SubCell"/>
</dbReference>
<dbReference type="GO" id="GO:0004252">
    <property type="term" value="F:serine-type endopeptidase activity"/>
    <property type="evidence" value="ECO:0007669"/>
    <property type="project" value="InterPro"/>
</dbReference>
<dbReference type="GO" id="GO:0006508">
    <property type="term" value="P:proteolysis"/>
    <property type="evidence" value="ECO:0007669"/>
    <property type="project" value="UniProtKB-KW"/>
</dbReference>
<dbReference type="CDD" id="cd04077">
    <property type="entry name" value="Peptidases_S8_PCSK9_ProteinaseK_like"/>
    <property type="match status" value="1"/>
</dbReference>
<dbReference type="FunFam" id="3.30.70.80:FF:000008">
    <property type="entry name" value="Alkaline protease 1"/>
    <property type="match status" value="1"/>
</dbReference>
<dbReference type="FunFam" id="3.40.50.200:FF:000014">
    <property type="entry name" value="Proteinase K"/>
    <property type="match status" value="1"/>
</dbReference>
<dbReference type="Gene3D" id="3.30.70.80">
    <property type="entry name" value="Peptidase S8 propeptide/proteinase inhibitor I9"/>
    <property type="match status" value="1"/>
</dbReference>
<dbReference type="Gene3D" id="3.40.50.200">
    <property type="entry name" value="Peptidase S8/S53 domain"/>
    <property type="match status" value="1"/>
</dbReference>
<dbReference type="InterPro" id="IPR034193">
    <property type="entry name" value="PCSK9_ProteinaseK-like"/>
</dbReference>
<dbReference type="InterPro" id="IPR000209">
    <property type="entry name" value="Peptidase_S8/S53_dom"/>
</dbReference>
<dbReference type="InterPro" id="IPR036852">
    <property type="entry name" value="Peptidase_S8/S53_dom_sf"/>
</dbReference>
<dbReference type="InterPro" id="IPR022398">
    <property type="entry name" value="Peptidase_S8_His-AS"/>
</dbReference>
<dbReference type="InterPro" id="IPR023828">
    <property type="entry name" value="Peptidase_S8_Ser-AS"/>
</dbReference>
<dbReference type="InterPro" id="IPR050131">
    <property type="entry name" value="Peptidase_S8_subtilisin-like"/>
</dbReference>
<dbReference type="InterPro" id="IPR015500">
    <property type="entry name" value="Peptidase_S8_subtilisin-rel"/>
</dbReference>
<dbReference type="InterPro" id="IPR010259">
    <property type="entry name" value="S8pro/Inhibitor_I9"/>
</dbReference>
<dbReference type="InterPro" id="IPR037045">
    <property type="entry name" value="S8pro/Inhibitor_I9_sf"/>
</dbReference>
<dbReference type="PANTHER" id="PTHR43806:SF58">
    <property type="entry name" value="ALKALINE PROTEASE 1-RELATED"/>
    <property type="match status" value="1"/>
</dbReference>
<dbReference type="PANTHER" id="PTHR43806">
    <property type="entry name" value="PEPTIDASE S8"/>
    <property type="match status" value="1"/>
</dbReference>
<dbReference type="Pfam" id="PF05922">
    <property type="entry name" value="Inhibitor_I9"/>
    <property type="match status" value="1"/>
</dbReference>
<dbReference type="Pfam" id="PF00082">
    <property type="entry name" value="Peptidase_S8"/>
    <property type="match status" value="1"/>
</dbReference>
<dbReference type="PRINTS" id="PR00723">
    <property type="entry name" value="SUBTILISIN"/>
</dbReference>
<dbReference type="SUPFAM" id="SSF54897">
    <property type="entry name" value="Protease propeptides/inhibitors"/>
    <property type="match status" value="1"/>
</dbReference>
<dbReference type="SUPFAM" id="SSF52743">
    <property type="entry name" value="Subtilisin-like"/>
    <property type="match status" value="1"/>
</dbReference>
<dbReference type="PROSITE" id="PS51892">
    <property type="entry name" value="SUBTILASE"/>
    <property type="match status" value="1"/>
</dbReference>
<dbReference type="PROSITE" id="PS00137">
    <property type="entry name" value="SUBTILASE_HIS"/>
    <property type="match status" value="1"/>
</dbReference>
<dbReference type="PROSITE" id="PS00138">
    <property type="entry name" value="SUBTILASE_SER"/>
    <property type="match status" value="1"/>
</dbReference>
<organism>
    <name type="scientific">Aspergillus flavus</name>
    <dbReference type="NCBI Taxonomy" id="5059"/>
    <lineage>
        <taxon>Eukaryota</taxon>
        <taxon>Fungi</taxon>
        <taxon>Dikarya</taxon>
        <taxon>Ascomycota</taxon>
        <taxon>Pezizomycotina</taxon>
        <taxon>Eurotiomycetes</taxon>
        <taxon>Eurotiomycetidae</taxon>
        <taxon>Eurotiales</taxon>
        <taxon>Aspergillaceae</taxon>
        <taxon>Aspergillus</taxon>
        <taxon>Aspergillus subgen. Circumdati</taxon>
    </lineage>
</organism>
<accession>P35211</accession>
<feature type="signal peptide" evidence="2">
    <location>
        <begin position="1"/>
        <end position="21"/>
    </location>
</feature>
<feature type="propeptide" id="PRO_0000027080">
    <location>
        <begin position="22"/>
        <end position="121"/>
    </location>
</feature>
<feature type="chain" id="PRO_0000027081" description="Alkaline protease 1">
    <location>
        <begin position="122"/>
        <end position="403"/>
    </location>
</feature>
<feature type="domain" description="Inhibitor I9" evidence="2">
    <location>
        <begin position="36"/>
        <end position="120"/>
    </location>
</feature>
<feature type="domain" description="Peptidase S8" evidence="3">
    <location>
        <begin position="130"/>
        <end position="403"/>
    </location>
</feature>
<feature type="active site" description="Charge relay system" evidence="3">
    <location>
        <position position="162"/>
    </location>
</feature>
<feature type="active site" description="Charge relay system" evidence="3">
    <location>
        <position position="193"/>
    </location>
</feature>
<feature type="active site" description="Charge relay system" evidence="3">
    <location>
        <position position="349"/>
    </location>
</feature>
<feature type="glycosylation site" description="N-linked (GlcNAc...) asparagine" evidence="2">
    <location>
        <position position="253"/>
    </location>
</feature>
<feature type="glycosylation site" description="N-linked (GlcNAc...) asparagine" evidence="2">
    <location>
        <position position="309"/>
    </location>
</feature>
<proteinExistence type="evidence at protein level"/>
<evidence type="ECO:0000250" key="1"/>
<evidence type="ECO:0000255" key="2"/>
<evidence type="ECO:0000255" key="3">
    <source>
        <dbReference type="PROSITE-ProRule" id="PRU01240"/>
    </source>
</evidence>
<evidence type="ECO:0000305" key="4"/>